<feature type="chain" id="PRO_0000134930" description="Probable molybdenum cofactor guanylyltransferase">
    <location>
        <begin position="1"/>
        <end position="197"/>
    </location>
</feature>
<feature type="binding site" evidence="1">
    <location>
        <begin position="10"/>
        <end position="12"/>
    </location>
    <ligand>
        <name>GTP</name>
        <dbReference type="ChEBI" id="CHEBI:37565"/>
    </ligand>
</feature>
<feature type="binding site" evidence="1">
    <location>
        <position position="22"/>
    </location>
    <ligand>
        <name>GTP</name>
        <dbReference type="ChEBI" id="CHEBI:37565"/>
    </ligand>
</feature>
<feature type="binding site" evidence="1">
    <location>
        <position position="73"/>
    </location>
    <ligand>
        <name>GTP</name>
        <dbReference type="ChEBI" id="CHEBI:37565"/>
    </ligand>
</feature>
<feature type="binding site" evidence="1">
    <location>
        <position position="102"/>
    </location>
    <ligand>
        <name>GTP</name>
        <dbReference type="ChEBI" id="CHEBI:37565"/>
    </ligand>
</feature>
<feature type="binding site" evidence="1">
    <location>
        <position position="102"/>
    </location>
    <ligand>
        <name>Mg(2+)</name>
        <dbReference type="ChEBI" id="CHEBI:18420"/>
    </ligand>
</feature>
<sequence length="197" mass="21557">MSELDSVAVLCGGRGRRMGSDKGLLLMDDRPFIEIITAKLLGHFSDVLVVLRDTDQAGTYRGILDDRVRILTDELPGAGPLGGIYTALGNISGDAALFLPCDAPLVTDEFLVNMKECFRRLGDSCDAIVPWGDDGPEPLHAVYSARVRGTVEALLSKNKRRVGTLIESINSCRIAAIRLDPTLQSFRNFNRPEDLRI</sequence>
<dbReference type="EC" id="2.7.7.77" evidence="1"/>
<dbReference type="EMBL" id="AE000666">
    <property type="protein sequence ID" value="AAB84649.1"/>
    <property type="status" value="ALT_INIT"/>
    <property type="molecule type" value="Genomic_DNA"/>
</dbReference>
<dbReference type="PIR" id="E69057">
    <property type="entry name" value="E69057"/>
</dbReference>
<dbReference type="SMR" id="O26246"/>
<dbReference type="STRING" id="187420.MTH_143"/>
<dbReference type="PaxDb" id="187420-MTH_143"/>
<dbReference type="EnsemblBacteria" id="AAB84649">
    <property type="protein sequence ID" value="AAB84649"/>
    <property type="gene ID" value="MTH_143"/>
</dbReference>
<dbReference type="KEGG" id="mth:MTH_143"/>
<dbReference type="PATRIC" id="fig|187420.15.peg.116"/>
<dbReference type="HOGENOM" id="CLU_055597_2_2_2"/>
<dbReference type="InParanoid" id="O26246"/>
<dbReference type="Proteomes" id="UP000005223">
    <property type="component" value="Chromosome"/>
</dbReference>
<dbReference type="GO" id="GO:0005737">
    <property type="term" value="C:cytoplasm"/>
    <property type="evidence" value="ECO:0007669"/>
    <property type="project" value="UniProtKB-SubCell"/>
</dbReference>
<dbReference type="GO" id="GO:0005525">
    <property type="term" value="F:GTP binding"/>
    <property type="evidence" value="ECO:0007669"/>
    <property type="project" value="UniProtKB-UniRule"/>
</dbReference>
<dbReference type="GO" id="GO:0046872">
    <property type="term" value="F:metal ion binding"/>
    <property type="evidence" value="ECO:0007669"/>
    <property type="project" value="UniProtKB-KW"/>
</dbReference>
<dbReference type="GO" id="GO:0061603">
    <property type="term" value="F:molybdenum cofactor guanylyltransferase activity"/>
    <property type="evidence" value="ECO:0007669"/>
    <property type="project" value="UniProtKB-EC"/>
</dbReference>
<dbReference type="GO" id="GO:0006777">
    <property type="term" value="P:Mo-molybdopterin cofactor biosynthetic process"/>
    <property type="evidence" value="ECO:0007669"/>
    <property type="project" value="UniProtKB-KW"/>
</dbReference>
<dbReference type="CDD" id="cd02503">
    <property type="entry name" value="MobA"/>
    <property type="match status" value="1"/>
</dbReference>
<dbReference type="Gene3D" id="3.90.550.10">
    <property type="entry name" value="Spore Coat Polysaccharide Biosynthesis Protein SpsA, Chain A"/>
    <property type="match status" value="1"/>
</dbReference>
<dbReference type="HAMAP" id="MF_00316">
    <property type="entry name" value="MobA"/>
    <property type="match status" value="1"/>
</dbReference>
<dbReference type="InterPro" id="IPR025877">
    <property type="entry name" value="MobA-like_NTP_Trfase"/>
</dbReference>
<dbReference type="InterPro" id="IPR013482">
    <property type="entry name" value="Molybde_CF_guanTrfase"/>
</dbReference>
<dbReference type="InterPro" id="IPR029044">
    <property type="entry name" value="Nucleotide-diphossugar_trans"/>
</dbReference>
<dbReference type="PANTHER" id="PTHR19136">
    <property type="entry name" value="MOLYBDENUM COFACTOR GUANYLYLTRANSFERASE"/>
    <property type="match status" value="1"/>
</dbReference>
<dbReference type="PANTHER" id="PTHR19136:SF81">
    <property type="entry name" value="MOLYBDENUM COFACTOR GUANYLYLTRANSFERASE"/>
    <property type="match status" value="1"/>
</dbReference>
<dbReference type="Pfam" id="PF12804">
    <property type="entry name" value="NTP_transf_3"/>
    <property type="match status" value="1"/>
</dbReference>
<dbReference type="SUPFAM" id="SSF53448">
    <property type="entry name" value="Nucleotide-diphospho-sugar transferases"/>
    <property type="match status" value="1"/>
</dbReference>
<name>MOBA_METTH</name>
<gene>
    <name evidence="1" type="primary">mobA</name>
    <name type="ordered locus">MTH_143</name>
</gene>
<evidence type="ECO:0000255" key="1">
    <source>
        <dbReference type="HAMAP-Rule" id="MF_00316"/>
    </source>
</evidence>
<evidence type="ECO:0000305" key="2"/>
<comment type="function">
    <text evidence="1">Transfers a GMP moiety from GTP to Mo-molybdopterin (Mo-MPT) cofactor (Moco or molybdenum cofactor) to form Mo-molybdopterin guanine dinucleotide (Mo-MGD) cofactor.</text>
</comment>
<comment type="catalytic activity">
    <reaction evidence="1">
        <text>Mo-molybdopterin + GTP + H(+) = Mo-molybdopterin guanine dinucleotide + diphosphate</text>
        <dbReference type="Rhea" id="RHEA:34243"/>
        <dbReference type="ChEBI" id="CHEBI:15378"/>
        <dbReference type="ChEBI" id="CHEBI:33019"/>
        <dbReference type="ChEBI" id="CHEBI:37565"/>
        <dbReference type="ChEBI" id="CHEBI:71302"/>
        <dbReference type="ChEBI" id="CHEBI:71310"/>
        <dbReference type="EC" id="2.7.7.77"/>
    </reaction>
</comment>
<comment type="cofactor">
    <cofactor evidence="1">
        <name>Mg(2+)</name>
        <dbReference type="ChEBI" id="CHEBI:18420"/>
    </cofactor>
</comment>
<comment type="subcellular location">
    <subcellularLocation>
        <location evidence="1">Cytoplasm</location>
    </subcellularLocation>
</comment>
<comment type="domain">
    <text evidence="1">The N-terminal domain determines nucleotide recognition and specific binding, while the C-terminal domain determines the specific binding to the target protein.</text>
</comment>
<comment type="similarity">
    <text evidence="1">Belongs to the MobA family.</text>
</comment>
<comment type="sequence caution" evidence="2">
    <conflict type="erroneous initiation">
        <sequence resource="EMBL-CDS" id="AAB84649"/>
    </conflict>
</comment>
<proteinExistence type="inferred from homology"/>
<organism>
    <name type="scientific">Methanothermobacter thermautotrophicus (strain ATCC 29096 / DSM 1053 / JCM 10044 / NBRC 100330 / Delta H)</name>
    <name type="common">Methanobacterium thermoautotrophicum</name>
    <dbReference type="NCBI Taxonomy" id="187420"/>
    <lineage>
        <taxon>Archaea</taxon>
        <taxon>Methanobacteriati</taxon>
        <taxon>Methanobacteriota</taxon>
        <taxon>Methanomada group</taxon>
        <taxon>Methanobacteria</taxon>
        <taxon>Methanobacteriales</taxon>
        <taxon>Methanobacteriaceae</taxon>
        <taxon>Methanothermobacter</taxon>
    </lineage>
</organism>
<reference key="1">
    <citation type="journal article" date="1997" name="J. Bacteriol.">
        <title>Complete genome sequence of Methanobacterium thermoautotrophicum deltaH: functional analysis and comparative genomics.</title>
        <authorList>
            <person name="Smith D.R."/>
            <person name="Doucette-Stamm L.A."/>
            <person name="Deloughery C."/>
            <person name="Lee H.-M."/>
            <person name="Dubois J."/>
            <person name="Aldredge T."/>
            <person name="Bashirzadeh R."/>
            <person name="Blakely D."/>
            <person name="Cook R."/>
            <person name="Gilbert K."/>
            <person name="Harrison D."/>
            <person name="Hoang L."/>
            <person name="Keagle P."/>
            <person name="Lumm W."/>
            <person name="Pothier B."/>
            <person name="Qiu D."/>
            <person name="Spadafora R."/>
            <person name="Vicare R."/>
            <person name="Wang Y."/>
            <person name="Wierzbowski J."/>
            <person name="Gibson R."/>
            <person name="Jiwani N."/>
            <person name="Caruso A."/>
            <person name="Bush D."/>
            <person name="Safer H."/>
            <person name="Patwell D."/>
            <person name="Prabhakar S."/>
            <person name="McDougall S."/>
            <person name="Shimer G."/>
            <person name="Goyal A."/>
            <person name="Pietrovski S."/>
            <person name="Church G.M."/>
            <person name="Daniels C.J."/>
            <person name="Mao J.-I."/>
            <person name="Rice P."/>
            <person name="Noelling J."/>
            <person name="Reeve J.N."/>
        </authorList>
    </citation>
    <scope>NUCLEOTIDE SEQUENCE [LARGE SCALE GENOMIC DNA]</scope>
    <source>
        <strain>ATCC 29096 / DSM 1053 / JCM 10044 / NBRC 100330 / Delta H</strain>
    </source>
</reference>
<keyword id="KW-0963">Cytoplasm</keyword>
<keyword id="KW-0342">GTP-binding</keyword>
<keyword id="KW-0460">Magnesium</keyword>
<keyword id="KW-0479">Metal-binding</keyword>
<keyword id="KW-0501">Molybdenum cofactor biosynthesis</keyword>
<keyword id="KW-0547">Nucleotide-binding</keyword>
<keyword id="KW-1185">Reference proteome</keyword>
<keyword id="KW-0808">Transferase</keyword>
<protein>
    <recommendedName>
        <fullName evidence="1">Probable molybdenum cofactor guanylyltransferase</fullName>
        <shortName evidence="1">MoCo guanylyltransferase</shortName>
        <ecNumber evidence="1">2.7.7.77</ecNumber>
    </recommendedName>
    <alternativeName>
        <fullName evidence="1">GTP:molybdopterin guanylyltransferase</fullName>
    </alternativeName>
    <alternativeName>
        <fullName evidence="1">Mo-MPT guanylyltransferase</fullName>
    </alternativeName>
    <alternativeName>
        <fullName evidence="1">Molybdopterin guanylyltransferase</fullName>
    </alternativeName>
    <alternativeName>
        <fullName evidence="1">Molybdopterin-guanine dinucleotide synthase</fullName>
        <shortName evidence="1">MGD synthase</shortName>
    </alternativeName>
</protein>
<accession>O26246</accession>